<dbReference type="EMBL" id="U52953">
    <property type="protein sequence ID" value="AAB61129.1"/>
    <property type="molecule type" value="Genomic_DNA"/>
</dbReference>
<dbReference type="SMR" id="O12161"/>
<dbReference type="MINT" id="O12161"/>
<dbReference type="Proteomes" id="UP000007686">
    <property type="component" value="Segment"/>
</dbReference>
<dbReference type="GO" id="GO:0005576">
    <property type="term" value="C:extracellular region"/>
    <property type="evidence" value="ECO:0007669"/>
    <property type="project" value="UniProtKB-SubCell"/>
</dbReference>
<dbReference type="GO" id="GO:0030430">
    <property type="term" value="C:host cell cytoplasm"/>
    <property type="evidence" value="ECO:0007669"/>
    <property type="project" value="UniProtKB-SubCell"/>
</dbReference>
<dbReference type="GO" id="GO:0044196">
    <property type="term" value="C:host cell nucleolus"/>
    <property type="evidence" value="ECO:0007669"/>
    <property type="project" value="UniProtKB-SubCell"/>
</dbReference>
<dbReference type="GO" id="GO:0042805">
    <property type="term" value="F:actinin binding"/>
    <property type="evidence" value="ECO:0007669"/>
    <property type="project" value="UniProtKB-UniRule"/>
</dbReference>
<dbReference type="GO" id="GO:0030332">
    <property type="term" value="F:cyclin binding"/>
    <property type="evidence" value="ECO:0007669"/>
    <property type="project" value="UniProtKB-UniRule"/>
</dbReference>
<dbReference type="GO" id="GO:0046872">
    <property type="term" value="F:metal ion binding"/>
    <property type="evidence" value="ECO:0007669"/>
    <property type="project" value="UniProtKB-UniRule"/>
</dbReference>
<dbReference type="GO" id="GO:0019904">
    <property type="term" value="F:protein domain specific binding"/>
    <property type="evidence" value="ECO:0007669"/>
    <property type="project" value="UniProtKB-UniRule"/>
</dbReference>
<dbReference type="GO" id="GO:0004865">
    <property type="term" value="F:protein serine/threonine phosphatase inhibitor activity"/>
    <property type="evidence" value="ECO:0007669"/>
    <property type="project" value="UniProtKB-KW"/>
</dbReference>
<dbReference type="GO" id="GO:0001070">
    <property type="term" value="F:RNA-binding transcription regulator activity"/>
    <property type="evidence" value="ECO:0007669"/>
    <property type="project" value="UniProtKB-UniRule"/>
</dbReference>
<dbReference type="GO" id="GO:1990970">
    <property type="term" value="F:trans-activation response element binding"/>
    <property type="evidence" value="ECO:0007669"/>
    <property type="project" value="UniProtKB-UniRule"/>
</dbReference>
<dbReference type="GO" id="GO:0006351">
    <property type="term" value="P:DNA-templated transcription"/>
    <property type="evidence" value="ECO:0007669"/>
    <property type="project" value="UniProtKB-UniRule"/>
</dbReference>
<dbReference type="GO" id="GO:0032968">
    <property type="term" value="P:positive regulation of transcription elongation by RNA polymerase II"/>
    <property type="evidence" value="ECO:0007669"/>
    <property type="project" value="UniProtKB-UniRule"/>
</dbReference>
<dbReference type="GO" id="GO:0050434">
    <property type="term" value="P:positive regulation of viral transcription"/>
    <property type="evidence" value="ECO:0007669"/>
    <property type="project" value="UniProtKB-UniRule"/>
</dbReference>
<dbReference type="GO" id="GO:0039525">
    <property type="term" value="P:symbiont-mediated perturbation of host chromatin organization"/>
    <property type="evidence" value="ECO:0007669"/>
    <property type="project" value="UniProtKB-UniRule"/>
</dbReference>
<dbReference type="GO" id="GO:0052170">
    <property type="term" value="P:symbiont-mediated suppression of host innate immune response"/>
    <property type="evidence" value="ECO:0007669"/>
    <property type="project" value="UniProtKB-KW"/>
</dbReference>
<dbReference type="GO" id="GO:0039606">
    <property type="term" value="P:symbiont-mediated suppression of host translation initiation"/>
    <property type="evidence" value="ECO:0007669"/>
    <property type="project" value="UniProtKB-KW"/>
</dbReference>
<dbReference type="GO" id="GO:0039502">
    <property type="term" value="P:symbiont-mediated suppression of host type I interferon-mediated signaling pathway"/>
    <property type="evidence" value="ECO:0007669"/>
    <property type="project" value="UniProtKB-UniRule"/>
</dbReference>
<dbReference type="Gene3D" id="4.10.20.10">
    <property type="entry name" value="Tat domain"/>
    <property type="match status" value="1"/>
</dbReference>
<dbReference type="HAMAP" id="MF_04079">
    <property type="entry name" value="HIV_TAT"/>
    <property type="match status" value="1"/>
</dbReference>
<dbReference type="InterPro" id="IPR001831">
    <property type="entry name" value="IV_Tat"/>
</dbReference>
<dbReference type="InterPro" id="IPR036963">
    <property type="entry name" value="Tat_dom_sf"/>
</dbReference>
<dbReference type="Pfam" id="PF00539">
    <property type="entry name" value="Tat"/>
    <property type="match status" value="1"/>
</dbReference>
<dbReference type="PRINTS" id="PR00055">
    <property type="entry name" value="HIVTATDOMAIN"/>
</dbReference>
<organism>
    <name type="scientific">Human immunodeficiency virus type 1 group M subtype C (isolate 92BR025)</name>
    <name type="common">HIV-1</name>
    <dbReference type="NCBI Taxonomy" id="388812"/>
    <lineage>
        <taxon>Viruses</taxon>
        <taxon>Riboviria</taxon>
        <taxon>Pararnavirae</taxon>
        <taxon>Artverviricota</taxon>
        <taxon>Revtraviricetes</taxon>
        <taxon>Ortervirales</taxon>
        <taxon>Retroviridae</taxon>
        <taxon>Orthoretrovirinae</taxon>
        <taxon>Lentivirus</taxon>
        <taxon>Human immunodeficiency virus type 1</taxon>
    </lineage>
</organism>
<sequence>MEPVDPNLEPWNHPGSQPKTACNNCYCKRCSYHCLVCFQTKGLGISYGRKKRRQRRSAPPSSEDHQNPIPKQPLPQTRGDQTGSEESKKKVESKTETDPFD</sequence>
<proteinExistence type="inferred from homology"/>
<name>TAT_HV192</name>
<accession>O12161</accession>
<keyword id="KW-0007">Acetylation</keyword>
<keyword id="KW-0010">Activator</keyword>
<keyword id="KW-0014">AIDS</keyword>
<keyword id="KW-0025">Alternative splicing</keyword>
<keyword id="KW-0053">Apoptosis</keyword>
<keyword id="KW-1035">Host cytoplasm</keyword>
<keyword id="KW-1048">Host nucleus</keyword>
<keyword id="KW-0945">Host-virus interaction</keyword>
<keyword id="KW-1090">Inhibition of host innate immune response by virus</keyword>
<keyword id="KW-1114">Inhibition of host interferon signaling pathway by virus</keyword>
<keyword id="KW-0922">Interferon antiviral system evasion</keyword>
<keyword id="KW-1017">Isopeptide bond</keyword>
<keyword id="KW-0479">Metal-binding</keyword>
<keyword id="KW-0488">Methylation</keyword>
<keyword id="KW-1122">Modulation of host chromatin by virus</keyword>
<keyword id="KW-1126">Modulation of host PP1 activity by virus</keyword>
<keyword id="KW-0597">Phosphoprotein</keyword>
<keyword id="KW-1185">Reference proteome</keyword>
<keyword id="KW-0694">RNA-binding</keyword>
<keyword id="KW-0964">Secreted</keyword>
<keyword id="KW-0804">Transcription</keyword>
<keyword id="KW-0805">Transcription regulation</keyword>
<keyword id="KW-0832">Ubl conjugation</keyword>
<keyword id="KW-0899">Viral immunoevasion</keyword>
<keyword id="KW-0862">Zinc</keyword>
<feature type="chain" id="PRO_0000244845" description="Protein Tat">
    <location>
        <begin position="1"/>
        <end position="101"/>
    </location>
</feature>
<feature type="region of interest" description="Transactivation" evidence="1">
    <location>
        <begin position="1"/>
        <end position="48"/>
    </location>
</feature>
<feature type="region of interest" description="Interaction with human CREBBP" evidence="1">
    <location>
        <begin position="1"/>
        <end position="24"/>
    </location>
</feature>
<feature type="region of interest" description="Cysteine-rich" evidence="1">
    <location>
        <begin position="22"/>
        <end position="37"/>
    </location>
</feature>
<feature type="region of interest" description="Core" evidence="1">
    <location>
        <begin position="38"/>
        <end position="48"/>
    </location>
</feature>
<feature type="region of interest" description="Disordered" evidence="2">
    <location>
        <begin position="47"/>
        <end position="101"/>
    </location>
</feature>
<feature type="region of interest" description="Interaction with the host capping enzyme RNGTT" evidence="1">
    <location>
        <begin position="49"/>
        <end position="86"/>
    </location>
</feature>
<feature type="short sequence motif" description="Nuclear localization signal, RNA-binding (TAR), and protein transduction" evidence="1">
    <location>
        <begin position="49"/>
        <end position="57"/>
    </location>
</feature>
<feature type="short sequence motif" description="Cell attachment site" evidence="1">
    <location>
        <begin position="78"/>
        <end position="80"/>
    </location>
</feature>
<feature type="compositionally biased region" description="Basic and acidic residues" evidence="2">
    <location>
        <begin position="85"/>
        <end position="101"/>
    </location>
</feature>
<feature type="binding site" evidence="1">
    <location>
        <position position="22"/>
    </location>
    <ligand>
        <name>Zn(2+)</name>
        <dbReference type="ChEBI" id="CHEBI:29105"/>
        <label>1</label>
    </ligand>
</feature>
<feature type="binding site" evidence="1">
    <location>
        <position position="25"/>
    </location>
    <ligand>
        <name>Zn(2+)</name>
        <dbReference type="ChEBI" id="CHEBI:29105"/>
        <label>2</label>
    </ligand>
</feature>
<feature type="binding site" evidence="1">
    <location>
        <position position="27"/>
    </location>
    <ligand>
        <name>Zn(2+)</name>
        <dbReference type="ChEBI" id="CHEBI:29105"/>
        <label>2</label>
    </ligand>
</feature>
<feature type="binding site" evidence="1">
    <location>
        <position position="30"/>
    </location>
    <ligand>
        <name>Zn(2+)</name>
        <dbReference type="ChEBI" id="CHEBI:29105"/>
        <label>2</label>
    </ligand>
</feature>
<feature type="binding site" evidence="1">
    <location>
        <position position="33"/>
    </location>
    <ligand>
        <name>Zn(2+)</name>
        <dbReference type="ChEBI" id="CHEBI:29105"/>
        <label>1</label>
    </ligand>
</feature>
<feature type="binding site" evidence="1">
    <location>
        <position position="34"/>
    </location>
    <ligand>
        <name>Zn(2+)</name>
        <dbReference type="ChEBI" id="CHEBI:29105"/>
        <label>1</label>
    </ligand>
</feature>
<feature type="binding site" evidence="1">
    <location>
        <position position="37"/>
    </location>
    <ligand>
        <name>Zn(2+)</name>
        <dbReference type="ChEBI" id="CHEBI:29105"/>
        <label>1</label>
    </ligand>
</feature>
<feature type="site" description="Essential for Tat translocation through the endosomal membrane" evidence="1">
    <location>
        <position position="11"/>
    </location>
</feature>
<feature type="modified residue" description="N6-acetyllysine; by host PCAF" evidence="1">
    <location>
        <position position="28"/>
    </location>
</feature>
<feature type="modified residue" description="N6-acetyllysine; by host EP300 and GCN5L2" evidence="1">
    <location>
        <position position="50"/>
    </location>
</feature>
<feature type="modified residue" description="N6-acetyllysine; by host EP300 and GCN5L2" evidence="1">
    <location>
        <position position="51"/>
    </location>
</feature>
<feature type="modified residue" description="Asymmetric dimethylarginine; by host PRMT6" evidence="1">
    <location>
        <position position="52"/>
    </location>
</feature>
<feature type="modified residue" description="Asymmetric dimethylarginine; by host PRMT6" evidence="1">
    <location>
        <position position="53"/>
    </location>
</feature>
<feature type="cross-link" description="Glycyl lysine isopeptide (Lys-Gly) (interchain with G-Cter in ubiquitin)" evidence="1">
    <location>
        <position position="71"/>
    </location>
</feature>
<feature type="splice variant" id="VSP_022400" description="In isoform Short.">
    <location>
        <begin position="73"/>
        <end position="101"/>
    </location>
</feature>
<gene>
    <name evidence="1" type="primary">tat</name>
</gene>
<evidence type="ECO:0000255" key="1">
    <source>
        <dbReference type="HAMAP-Rule" id="MF_04079"/>
    </source>
</evidence>
<evidence type="ECO:0000256" key="2">
    <source>
        <dbReference type="SAM" id="MobiDB-lite"/>
    </source>
</evidence>
<evidence type="ECO:0000305" key="3"/>
<reference key="1">
    <citation type="journal article" date="1996" name="J. Virol.">
        <title>Molecular cloning and analysis of functional envelope genes from human immunodeficiency virus type 1 sequence subtypes A through G. The WHO and NIAID Networks for HIV Isolation and Characterization.</title>
        <authorList>
            <person name="Gao F."/>
            <person name="Morrison S.G."/>
            <person name="Robertson D.L."/>
            <person name="Thornton C.L."/>
            <person name="Craig S."/>
            <person name="Karlsson G."/>
            <person name="Sodroski J."/>
            <person name="Morgado M."/>
            <person name="Galvao-Castro B."/>
            <person name="von Briesen H."/>
            <person name="Beddows S."/>
            <person name="Weber J."/>
            <person name="Sharp P.M."/>
            <person name="Shaw G.M."/>
            <person name="Hahn B.H."/>
        </authorList>
    </citation>
    <scope>NUCLEOTIDE SEQUENCE [GENOMIC DNA]</scope>
</reference>
<reference key="2">
    <citation type="journal article" date="2005" name="Microbes Infect.">
        <title>Decoding Tat: the biology of HIV Tat posttranslational modifications.</title>
        <authorList>
            <person name="Hetzer C."/>
            <person name="Dormeyer W."/>
            <person name="Schnolzer M."/>
            <person name="Ott M."/>
        </authorList>
    </citation>
    <scope>REVIEW</scope>
    <scope>ALTERNATIVE SPLICING</scope>
</reference>
<reference key="3">
    <citation type="journal article" date="2006" name="Front. Biosci.">
        <title>The multiple functions of HIV-1 Tat: proliferation versus apoptosis.</title>
        <authorList>
            <person name="Peruzzi F."/>
        </authorList>
    </citation>
    <scope>REVIEW</scope>
</reference>
<reference key="4">
    <citation type="journal article" date="2006" name="Microbes Infect.">
        <title>HIV tat and neurotoxicity.</title>
        <authorList>
            <person name="King J.E."/>
            <person name="Eugenin E.A."/>
            <person name="Buckner C.M."/>
            <person name="Berman J.W."/>
        </authorList>
    </citation>
    <scope>REVIEW</scope>
</reference>
<comment type="function">
    <text evidence="1">Transcriptional activator that increases RNA Pol II processivity, thereby increasing the level of full-length viral transcripts. Recognizes a hairpin structure at the 5'-LTR of the nascent viral mRNAs referred to as the transactivation responsive RNA element (TAR) and recruits the cyclin T1-CDK9 complex (P-TEFb complex) that will in turn hyperphosphorylate the RNA polymerase II to allow efficient elongation. The CDK9 component of P-TEFb and other Tat-activated kinases hyperphosphorylate the C-terminus of RNA Pol II that becomes stabilized and much more processive. Other factors such as HTATSF1/Tat-SF1, SUPT5H/SPT5, and HTATIP2 are also important for Tat's function. Besides its effect on RNA Pol II processivity, Tat induces chromatin remodeling of proviral genes by recruiting the histone acetyltransferases (HATs) CREBBP, EP300 and PCAF to the chromatin. This also contributes to the increase in proviral transcription rate, especially when the provirus integrates in transcriptionally silent region of the host genome. To ensure maximal activation of the LTR, Tat mediates nuclear translocation of NF-kappa-B by interacting with host RELA. Through its interaction with host TBP, Tat may also modulate transcription initiation. Tat can reactivate a latently infected cell by penetrating in it and transactivating its LTR promoter. In the cytoplasm, Tat is thought to act as a translational activator of HIV-1 mRNAs.</text>
</comment>
<comment type="function">
    <text evidence="1">Extracellular circulating Tat can be endocytosed by surrounding uninfected cells via the binding to several surface receptors such as CD26, CXCR4, heparan sulfate proteoglycans (HSPG) or LDLR. Neurons are rarely infected, but they internalize Tat via their LDLR. Through its interaction with nuclear HATs, Tat is potentially able to control the acetylation-dependent cellular gene expression. Modulates the expression of many cellular genes involved in cell survival, proliferation or in coding for cytokines or cytokine receptors. Tat plays a role in T-cell and neurons apoptosis. Tat induced neurotoxicity and apoptosis probably contribute to neuroAIDS. Circulating Tat also acts as a chemokine-like and/or growth factor-like molecule that binds to specific receptors on the surface of the cells, affecting many cellular pathways. In the vascular system, Tat binds to ITGAV/ITGB3 and ITGA5/ITGB1 integrins dimers at the surface of endothelial cells and competes with bFGF for heparin-binding sites, leading to an excess of soluble bFGF.</text>
</comment>
<comment type="subunit">
    <text evidence="1">Interacts with host CCNT1. Associates with the P-TEFb complex composed at least of Tat, P-TEFb (CDK9 and CCNT1), TAR RNA, RNA Pol II. Recruits the HATs CREBBP, TAF1/TFIID, EP300, PCAF and GCN5L2. Interacts with host KAT5/Tip60; this interaction targets the latter to degradation. Interacts with the host deacetylase SIRT1. Interacts with host capping enzyme RNGTT; this interaction stimulates RNGTT. Binds to host KDR, and to the host integrins ITGAV/ITGB3 and ITGA5/ITGB1. Interacts with host KPNB1/importin beta-1 without previous binding to KPNA1/importin alpha-1. Interacts with EIF2AK2. Interacts with host nucleosome assembly protein NAP1L1; this interaction may be required for the transport of Tat within the nucleus, since the two proteins interact at the nuclear rim. Interacts with host C1QBP/SF2P32; this interaction involves lysine-acetylated Tat. Interacts with the host chemokine receptors CCR2, CCR3 and CXCR4. Interacts with host DPP4/CD26; this interaction may trigger an anti-proliferative effect. Interacts with host LDLR. Interacts with the host extracellular matrix metalloproteinase MMP1. Interacts with host PRMT6; this interaction mediates Tat's methylation. Interacts with, and is ubiquitinated by MDM2/Hdm2. Interacts with host PSMC3 and HTATIP2. Interacts with STAB1; this interaction may overcome SATB1-mediated repression of IL2 and IL2RA (interleukin) in T cells by binding to the same domain than HDAC1. Interacts (when acetylated) with human CDK13, thereby increasing HIV-1 mRNA splicing and promoting the production of the doubly spliced HIV-1 protein Nef. Interacts with host TBP; this interaction modulates the activity of transcriptional pre-initiation complex. Interacts with host RELA. Interacts with host PLSCR1; this interaction negatively regulates Tat transactivation activity by altering its subcellular distribution.</text>
</comment>
<comment type="subcellular location">
    <subcellularLocation>
        <location evidence="1">Host nucleus</location>
        <location evidence="1">Host nucleolus</location>
    </subcellularLocation>
    <subcellularLocation>
        <location evidence="1">Host cytoplasm</location>
    </subcellularLocation>
    <subcellularLocation>
        <location evidence="1">Secreted</location>
    </subcellularLocation>
    <text evidence="1">Probably localizes to both nuclear and nucleolar compartments. Nuclear localization is mediated through the interaction of the nuclear localization signal with importin KPNB1. Secretion occurs through a Golgi-independent pathway. Tat is released from infected cells to the extracellular space where it remains associated to the cell membrane, or is secreted into the cerebrospinal fluid and sera. Extracellular Tat can be endocytosed by surrounding uninfected cells via binding to several receptors depending on the cell type.</text>
</comment>
<comment type="alternative products">
    <event type="alternative splicing"/>
    <isoform>
        <id>O12161-1</id>
        <name>Long</name>
        <sequence type="displayed"/>
    </isoform>
    <isoform>
        <id>O12161-2</id>
        <name>Short</name>
        <sequence type="described" ref="VSP_022400"/>
    </isoform>
</comment>
<comment type="domain">
    <text evidence="1">The cell attachment site mediates the interaction with ITGAV/ITGB3 and ITGA5/ITGB1 integrins, leading to vascular cell migration and invasion. This interaction also provides endothelial cells with the adhesion signal they require to grow in response to mitogens.</text>
</comment>
<comment type="domain">
    <text evidence="1">The Cys-rich region may bind 2 zinc ions. This region is involved in binding to KAT5.</text>
</comment>
<comment type="domain">
    <text evidence="1">The transactivation domain mediates the interaction with CCNT1, GCN5L2, and MDM2.</text>
</comment>
<comment type="domain">
    <text evidence="1">The Arg-rich RNA-binding region binds the TAR RNA. This region also mediates the nuclear localization through direct binding to KPNB1 and is involved in Tat's transfer across cell membranes (protein transduction). The same region is required for the interaction with EP300, PCAF, EIF2AK2 and KDR.</text>
</comment>
<comment type="PTM">
    <text evidence="1">Asymmetrical arginine methylation by host PRMT6 seems to diminish the transactivation capacity of Tat and affects the interaction with host CCNT1.</text>
</comment>
<comment type="PTM">
    <text evidence="1">Acetylation by EP300, CREBBP, GCN5L2/GCN5 and PCAF regulates the transactivation activity of Tat. EP300-mediated acetylation of Lys-50 promotes dissociation of Tat from the TAR RNA through the competitive binding to PCAF's bromodomain. In addition, the non-acetylated Tat's N-terminus can also interact with PCAF. PCAF-mediated acetylation of Lys-28 enhances Tat's binding to CCNT1. Lys-50 is deacetylated by SIRT1.</text>
</comment>
<comment type="PTM">
    <text evidence="1">Polyubiquitination by host MDM2 does not target Tat to degradation, but activates its transactivation function and fosters interaction with CCNT1 and TAR RNA.</text>
</comment>
<comment type="PTM">
    <text evidence="1">Phosphorylated by EIF2AK2 on serine and threonine residues adjacent to the basic region important for TAR RNA binding and function. Phosphorylation of Tat by EIF2AK2 is dependent on the prior activation of EIF2AK2 by dsRNA.</text>
</comment>
<comment type="miscellaneous">
    <text>HIV-1 lineages are divided in three main groups, M (for Major), O (for Outlier), and N (for New, or Non-M, Non-O). The vast majority of strains found worldwide belong to the group M. Group O seems to be endemic to and largely confined to Cameroon and neighboring countries in West Central Africa, where these viruses represent a small minority of HIV-1 strains. The group N is represented by a limited number of isolates from Caeroonian persons. The group M is further subdivided in 9 clades or subtypes (A to D, F to H, J and K).</text>
</comment>
<comment type="miscellaneous">
    <text evidence="1">HIV-1 lineages are divided in three main groups, M (for Major), O (for Outlier), and N (for New, or Non-M, Non-O). The vast majority of strains found worldwide belong to the group M. Group O seems to be endemic to and largely confined to Cameroon and neighboring countries in West Central Africa, where these viruses represent a small minority of HIV-1 strains. The group N is represented by a limited number of isolates from Cameroonian persons. The group M is further subdivided in 9 clades or subtypes (A to D, F to H, J and K).</text>
</comment>
<comment type="miscellaneous">
    <molecule>Isoform Short</molecule>
    <text evidence="3">Expressed in the late stage of the infection cycle, when unspliced viral RNAs are exported to the cytoplasm by the viral Rev protein.</text>
</comment>
<comment type="similarity">
    <text evidence="1">Belongs to the lentiviruses Tat family.</text>
</comment>
<organismHost>
    <name type="scientific">Homo sapiens</name>
    <name type="common">Human</name>
    <dbReference type="NCBI Taxonomy" id="9606"/>
</organismHost>
<protein>
    <recommendedName>
        <fullName evidence="1">Protein Tat</fullName>
    </recommendedName>
    <alternativeName>
        <fullName evidence="1">Transactivating regulatory protein</fullName>
    </alternativeName>
</protein>